<organism>
    <name type="scientific">Sus scrofa</name>
    <name type="common">Pig</name>
    <dbReference type="NCBI Taxonomy" id="9823"/>
    <lineage>
        <taxon>Eukaryota</taxon>
        <taxon>Metazoa</taxon>
        <taxon>Chordata</taxon>
        <taxon>Craniata</taxon>
        <taxon>Vertebrata</taxon>
        <taxon>Euteleostomi</taxon>
        <taxon>Mammalia</taxon>
        <taxon>Eutheria</taxon>
        <taxon>Laurasiatheria</taxon>
        <taxon>Artiodactyla</taxon>
        <taxon>Suina</taxon>
        <taxon>Suidae</taxon>
        <taxon>Sus</taxon>
    </lineage>
</organism>
<evidence type="ECO:0000250" key="1"/>
<evidence type="ECO:0000250" key="2">
    <source>
        <dbReference type="UniProtKB" id="O89049"/>
    </source>
</evidence>
<evidence type="ECO:0000250" key="3">
    <source>
        <dbReference type="UniProtKB" id="Q16881"/>
    </source>
</evidence>
<evidence type="ECO:0000250" key="4">
    <source>
        <dbReference type="UniProtKB" id="Q9JMH6"/>
    </source>
</evidence>
<evidence type="ECO:0000305" key="5"/>
<proteinExistence type="evidence at transcript level"/>
<sequence length="499" mass="54904">MNGAEELPEMYDYDLIIIGGGSGGLAAAKEAARFNKRVMVLDFVTPTPLGTRWGLGGTCVNVSCIPKKLMHQAALLGQALRDSRNYGWNVEETIKHDWERMTEAVQNHIGSLNWGYRVALREKKVTYENAYGQFVGPHRIKATNNKGKEKIYSAEKFLIATGERPRYLGIPGDKEYCISSDDLFSLPYCPGKTLVVGASYVALECAGFLAGIGLDVTVMVRSILLRGFDQDMANKIGEHMEEHGIKFIRQFVPIKVEQIEAGTPGRLRVVAQSTNSEEIIEGEYNTVMLAIGRDACTRKIGLETVGVKINEKTGKIPVTDEEQTNVPYIYAIGDILEDKVELTPVAIQAGRLLAQRLYAGSTVKCDYENVPTTVFTPLEYGACGLSEEKAVEKFGEENIEVYHSYFWPLEWTIPSRDNNKCYAKIICNTKDNERVVGFHVLGPNAGEVTQGFAAALKCGLTKKQLDSTIGIHPVCAEVFTTLSVTKRSGASILQAGCUG</sequence>
<name>TRXR1_PIG</name>
<keyword id="KW-0963">Cytoplasm</keyword>
<keyword id="KW-1015">Disulfide bond</keyword>
<keyword id="KW-0274">FAD</keyword>
<keyword id="KW-0285">Flavoprotein</keyword>
<keyword id="KW-0521">NADP</keyword>
<keyword id="KW-0560">Oxidoreductase</keyword>
<keyword id="KW-0597">Phosphoprotein</keyword>
<keyword id="KW-0676">Redox-active center</keyword>
<keyword id="KW-1185">Reference proteome</keyword>
<keyword id="KW-0712">Selenocysteine</keyword>
<keyword id="KW-0832">Ubl conjugation</keyword>
<protein>
    <recommendedName>
        <fullName evidence="5">Thioredoxin reductase 1, cytoplasmic</fullName>
        <shortName>TR</shortName>
        <ecNumber evidence="3">1.8.1.9</ecNumber>
    </recommendedName>
    <alternativeName>
        <fullName evidence="3">Peroxidase TXNRD1</fullName>
        <ecNumber evidence="3">1.11.1.2</ecNumber>
    </alternativeName>
    <alternativeName>
        <fullName>Thioredoxin reductase TR1</fullName>
    </alternativeName>
</protein>
<comment type="function">
    <text evidence="3">Reduces disulfideprotein thioredoxin (Trx) to its dithiol-containing form. Homodimeric flavoprotein involved in the regulation of cellular redox reactions, growth and differentiation. Contains a selenocysteine residue at the C-terminal active site that is essential for catalysis. Also has reductase activity on hydrogen peroxide (H2O2).</text>
</comment>
<comment type="catalytic activity">
    <reaction evidence="3">
        <text>[thioredoxin]-dithiol + NADP(+) = [thioredoxin]-disulfide + NADPH + H(+)</text>
        <dbReference type="Rhea" id="RHEA:20345"/>
        <dbReference type="Rhea" id="RHEA-COMP:10698"/>
        <dbReference type="Rhea" id="RHEA-COMP:10700"/>
        <dbReference type="ChEBI" id="CHEBI:15378"/>
        <dbReference type="ChEBI" id="CHEBI:29950"/>
        <dbReference type="ChEBI" id="CHEBI:50058"/>
        <dbReference type="ChEBI" id="CHEBI:57783"/>
        <dbReference type="ChEBI" id="CHEBI:58349"/>
        <dbReference type="EC" id="1.8.1.9"/>
    </reaction>
    <physiologicalReaction direction="right-to-left" evidence="3">
        <dbReference type="Rhea" id="RHEA:20347"/>
    </physiologicalReaction>
</comment>
<comment type="catalytic activity">
    <reaction evidence="3">
        <text>H2O2 + NADPH + H(+) = NADP(+) + 2 H2O</text>
        <dbReference type="Rhea" id="RHEA:15173"/>
        <dbReference type="ChEBI" id="CHEBI:15377"/>
        <dbReference type="ChEBI" id="CHEBI:15378"/>
        <dbReference type="ChEBI" id="CHEBI:16240"/>
        <dbReference type="ChEBI" id="CHEBI:57783"/>
        <dbReference type="ChEBI" id="CHEBI:58349"/>
        <dbReference type="EC" id="1.11.1.2"/>
    </reaction>
    <physiologicalReaction direction="left-to-right" evidence="3">
        <dbReference type="Rhea" id="RHEA:15174"/>
    </physiologicalReaction>
</comment>
<comment type="cofactor">
    <cofactor evidence="3">
        <name>FAD</name>
        <dbReference type="ChEBI" id="CHEBI:57692"/>
    </cofactor>
    <text evidence="3">Binds 1 FAD per subunit.</text>
</comment>
<comment type="subunit">
    <text evidence="3">Homodimer.</text>
</comment>
<comment type="subcellular location">
    <subcellularLocation>
        <location evidence="3">Cytoplasm</location>
    </subcellularLocation>
</comment>
<comment type="PTM">
    <text evidence="3">ISGylated.</text>
</comment>
<comment type="miscellaneous">
    <text evidence="2">The thioredoxin reductase active site is a redox-active disulfide bond. The selenocysteine residue is also essential for catalytic activity.</text>
</comment>
<comment type="similarity">
    <text evidence="5">Belongs to the class-I pyridine nucleotide-disulfide oxidoreductase family.</text>
</comment>
<gene>
    <name type="primary">TXNRD1</name>
</gene>
<feature type="chain" id="PRO_0000067983" description="Thioredoxin reductase 1, cytoplasmic">
    <location>
        <begin position="1"/>
        <end position="499"/>
    </location>
</feature>
<feature type="active site" description="Proton acceptor" evidence="1">
    <location>
        <position position="472"/>
    </location>
</feature>
<feature type="binding site" evidence="3">
    <location>
        <begin position="22"/>
        <end position="23"/>
    </location>
    <ligand>
        <name>FAD</name>
        <dbReference type="ChEBI" id="CHEBI:57692"/>
    </ligand>
</feature>
<feature type="binding site" evidence="3">
    <location>
        <begin position="42"/>
        <end position="43"/>
    </location>
    <ligand>
        <name>FAD</name>
        <dbReference type="ChEBI" id="CHEBI:57692"/>
    </ligand>
</feature>
<feature type="binding site" evidence="3">
    <location>
        <begin position="58"/>
        <end position="59"/>
    </location>
    <ligand>
        <name>FAD</name>
        <dbReference type="ChEBI" id="CHEBI:57692"/>
    </ligand>
</feature>
<feature type="binding site" evidence="3">
    <location>
        <begin position="63"/>
        <end position="67"/>
    </location>
    <ligand>
        <name>FAD</name>
        <dbReference type="ChEBI" id="CHEBI:57692"/>
    </ligand>
</feature>
<feature type="binding site" evidence="3">
    <location>
        <begin position="131"/>
        <end position="132"/>
    </location>
    <ligand>
        <name>FAD</name>
        <dbReference type="ChEBI" id="CHEBI:57692"/>
    </ligand>
</feature>
<feature type="binding site" evidence="3">
    <location>
        <position position="161"/>
    </location>
    <ligand>
        <name>FAD</name>
        <dbReference type="ChEBI" id="CHEBI:57692"/>
    </ligand>
</feature>
<feature type="binding site" evidence="3">
    <location>
        <position position="166"/>
    </location>
    <ligand>
        <name>NADP(+)</name>
        <dbReference type="ChEBI" id="CHEBI:58349"/>
    </ligand>
</feature>
<feature type="binding site" evidence="3">
    <location>
        <begin position="198"/>
        <end position="204"/>
    </location>
    <ligand>
        <name>NADP(+)</name>
        <dbReference type="ChEBI" id="CHEBI:58349"/>
    </ligand>
</feature>
<feature type="binding site" evidence="3">
    <location>
        <position position="200"/>
    </location>
    <ligand>
        <name>FAD</name>
        <dbReference type="ChEBI" id="CHEBI:57692"/>
    </ligand>
</feature>
<feature type="binding site" evidence="3">
    <location>
        <begin position="221"/>
        <end position="222"/>
    </location>
    <ligand>
        <name>NADP(+)</name>
        <dbReference type="ChEBI" id="CHEBI:58349"/>
    </ligand>
</feature>
<feature type="binding site" evidence="3">
    <location>
        <begin position="226"/>
        <end position="228"/>
    </location>
    <ligand>
        <name>NADP(+)</name>
        <dbReference type="ChEBI" id="CHEBI:58349"/>
    </ligand>
</feature>
<feature type="binding site" evidence="2">
    <location>
        <position position="226"/>
    </location>
    <ligand>
        <name>NADP(+)</name>
        <dbReference type="ChEBI" id="CHEBI:58349"/>
    </ligand>
</feature>
<feature type="binding site" evidence="3">
    <location>
        <begin position="292"/>
        <end position="293"/>
    </location>
    <ligand>
        <name>NADP(+)</name>
        <dbReference type="ChEBI" id="CHEBI:58349"/>
    </ligand>
</feature>
<feature type="binding site" evidence="3">
    <location>
        <position position="315"/>
    </location>
    <ligand>
        <name>NADP(+)</name>
        <dbReference type="ChEBI" id="CHEBI:58349"/>
    </ligand>
</feature>
<feature type="binding site" evidence="3">
    <location>
        <position position="334"/>
    </location>
    <ligand>
        <name>FAD</name>
        <dbReference type="ChEBI" id="CHEBI:57692"/>
    </ligand>
</feature>
<feature type="binding site" evidence="3">
    <location>
        <begin position="341"/>
        <end position="343"/>
    </location>
    <ligand>
        <name>FAD</name>
        <dbReference type="ChEBI" id="CHEBI:57692"/>
    </ligand>
</feature>
<feature type="binding site" evidence="3">
    <location>
        <position position="341"/>
    </location>
    <ligand>
        <name>NADP(+)</name>
        <dbReference type="ChEBI" id="CHEBI:58349"/>
    </ligand>
</feature>
<feature type="binding site" evidence="3">
    <location>
        <position position="472"/>
    </location>
    <ligand>
        <name>FAD</name>
        <dbReference type="ChEBI" id="CHEBI:57692"/>
    </ligand>
</feature>
<feature type="non-standard amino acid" description="Selenocysteine">
    <location>
        <position position="498"/>
    </location>
</feature>
<feature type="modified residue" description="N6-succinyllysine" evidence="4">
    <location>
        <position position="68"/>
    </location>
</feature>
<feature type="modified residue" description="Phosphotyrosine" evidence="3">
    <location>
        <position position="131"/>
    </location>
</feature>
<feature type="disulfide bond" description="Redox-active" evidence="1">
    <location>
        <begin position="59"/>
        <end position="64"/>
    </location>
</feature>
<feature type="cross-link" description="Cysteinyl-selenocysteine (Cys-Sec)" evidence="1">
    <location>
        <begin position="497"/>
        <end position="498"/>
    </location>
</feature>
<dbReference type="EC" id="1.8.1.9" evidence="3"/>
<dbReference type="EC" id="1.11.1.2" evidence="3"/>
<dbReference type="EMBL" id="AF277894">
    <property type="protein sequence ID" value="AAF78791.1"/>
    <property type="molecule type" value="mRNA"/>
</dbReference>
<dbReference type="FunCoup" id="Q9MYY8">
    <property type="interactions" value="517"/>
</dbReference>
<dbReference type="STRING" id="9823.ENSSSCP00000064457"/>
<dbReference type="PaxDb" id="9823-ENSSSCP00000000897"/>
<dbReference type="PeptideAtlas" id="Q9MYY8"/>
<dbReference type="eggNOG" id="KOG4716">
    <property type="taxonomic scope" value="Eukaryota"/>
</dbReference>
<dbReference type="InParanoid" id="Q9MYY8"/>
<dbReference type="Proteomes" id="UP000008227">
    <property type="component" value="Unplaced"/>
</dbReference>
<dbReference type="Proteomes" id="UP000314985">
    <property type="component" value="Unplaced"/>
</dbReference>
<dbReference type="Proteomes" id="UP000694570">
    <property type="component" value="Unplaced"/>
</dbReference>
<dbReference type="Proteomes" id="UP000694571">
    <property type="component" value="Unplaced"/>
</dbReference>
<dbReference type="Proteomes" id="UP000694720">
    <property type="component" value="Unplaced"/>
</dbReference>
<dbReference type="Proteomes" id="UP000694722">
    <property type="component" value="Unplaced"/>
</dbReference>
<dbReference type="Proteomes" id="UP000694723">
    <property type="component" value="Unplaced"/>
</dbReference>
<dbReference type="Proteomes" id="UP000694724">
    <property type="component" value="Unplaced"/>
</dbReference>
<dbReference type="Proteomes" id="UP000694725">
    <property type="component" value="Unplaced"/>
</dbReference>
<dbReference type="Proteomes" id="UP000694726">
    <property type="component" value="Unplaced"/>
</dbReference>
<dbReference type="Proteomes" id="UP000694727">
    <property type="component" value="Unplaced"/>
</dbReference>
<dbReference type="Proteomes" id="UP000694728">
    <property type="component" value="Unplaced"/>
</dbReference>
<dbReference type="GO" id="GO:0005737">
    <property type="term" value="C:cytoplasm"/>
    <property type="evidence" value="ECO:0000318"/>
    <property type="project" value="GO_Central"/>
</dbReference>
<dbReference type="GO" id="GO:0005829">
    <property type="term" value="C:cytosol"/>
    <property type="evidence" value="ECO:0000318"/>
    <property type="project" value="GO_Central"/>
</dbReference>
<dbReference type="GO" id="GO:0005739">
    <property type="term" value="C:mitochondrion"/>
    <property type="evidence" value="ECO:0000318"/>
    <property type="project" value="GO_Central"/>
</dbReference>
<dbReference type="GO" id="GO:0071949">
    <property type="term" value="F:FAD binding"/>
    <property type="evidence" value="ECO:0000250"/>
    <property type="project" value="UniProtKB"/>
</dbReference>
<dbReference type="GO" id="GO:0042802">
    <property type="term" value="F:identical protein binding"/>
    <property type="evidence" value="ECO:0000250"/>
    <property type="project" value="UniProtKB"/>
</dbReference>
<dbReference type="GO" id="GO:0050137">
    <property type="term" value="F:NADPH peroxidase activity"/>
    <property type="evidence" value="ECO:0000250"/>
    <property type="project" value="UniProtKB"/>
</dbReference>
<dbReference type="GO" id="GO:0004791">
    <property type="term" value="F:thioredoxin-disulfide reductase (NADPH) activity"/>
    <property type="evidence" value="ECO:0000250"/>
    <property type="project" value="UniProtKB"/>
</dbReference>
<dbReference type="GO" id="GO:0045454">
    <property type="term" value="P:cell redox homeostasis"/>
    <property type="evidence" value="ECO:0000318"/>
    <property type="project" value="GO_Central"/>
</dbReference>
<dbReference type="GO" id="GO:0006979">
    <property type="term" value="P:response to oxidative stress"/>
    <property type="evidence" value="ECO:0007669"/>
    <property type="project" value="UniProtKB-ARBA"/>
</dbReference>
<dbReference type="FunFam" id="3.50.50.60:FF:000190">
    <property type="entry name" value="Thioredoxin reductase"/>
    <property type="match status" value="1"/>
</dbReference>
<dbReference type="FunFam" id="3.30.390.30:FF:000004">
    <property type="entry name" value="Thioredoxin reductase 1, cytoplasmic"/>
    <property type="match status" value="1"/>
</dbReference>
<dbReference type="Gene3D" id="3.30.390.30">
    <property type="match status" value="1"/>
</dbReference>
<dbReference type="Gene3D" id="3.50.50.60">
    <property type="entry name" value="FAD/NAD(P)-binding domain"/>
    <property type="match status" value="2"/>
</dbReference>
<dbReference type="InterPro" id="IPR036188">
    <property type="entry name" value="FAD/NAD-bd_sf"/>
</dbReference>
<dbReference type="InterPro" id="IPR023753">
    <property type="entry name" value="FAD/NAD-binding_dom"/>
</dbReference>
<dbReference type="InterPro" id="IPR016156">
    <property type="entry name" value="FAD/NAD-linked_Rdtase_dimer_sf"/>
</dbReference>
<dbReference type="InterPro" id="IPR046952">
    <property type="entry name" value="GSHR/TRXR-like"/>
</dbReference>
<dbReference type="InterPro" id="IPR001100">
    <property type="entry name" value="Pyr_nuc-diS_OxRdtase"/>
</dbReference>
<dbReference type="InterPro" id="IPR004099">
    <property type="entry name" value="Pyr_nucl-diS_OxRdtase_dimer"/>
</dbReference>
<dbReference type="InterPro" id="IPR006338">
    <property type="entry name" value="Thioredoxin/glutathione_Rdtase"/>
</dbReference>
<dbReference type="NCBIfam" id="TIGR01438">
    <property type="entry name" value="TGR"/>
    <property type="match status" value="1"/>
</dbReference>
<dbReference type="PANTHER" id="PTHR42737">
    <property type="entry name" value="GLUTATHIONE REDUCTASE"/>
    <property type="match status" value="1"/>
</dbReference>
<dbReference type="PANTHER" id="PTHR42737:SF8">
    <property type="entry name" value="THIOREDOXIN-DISULFIDE REDUCTASE"/>
    <property type="match status" value="1"/>
</dbReference>
<dbReference type="Pfam" id="PF07992">
    <property type="entry name" value="Pyr_redox_2"/>
    <property type="match status" value="1"/>
</dbReference>
<dbReference type="Pfam" id="PF02852">
    <property type="entry name" value="Pyr_redox_dim"/>
    <property type="match status" value="1"/>
</dbReference>
<dbReference type="PIRSF" id="PIRSF000350">
    <property type="entry name" value="Mercury_reductase_MerA"/>
    <property type="match status" value="1"/>
</dbReference>
<dbReference type="PRINTS" id="PR00368">
    <property type="entry name" value="FADPNR"/>
</dbReference>
<dbReference type="PRINTS" id="PR00411">
    <property type="entry name" value="PNDRDTASEI"/>
</dbReference>
<dbReference type="SUPFAM" id="SSF51905">
    <property type="entry name" value="FAD/NAD(P)-binding domain"/>
    <property type="match status" value="1"/>
</dbReference>
<dbReference type="SUPFAM" id="SSF55424">
    <property type="entry name" value="FAD/NAD-linked reductases, dimerisation (C-terminal) domain"/>
    <property type="match status" value="1"/>
</dbReference>
<accession>Q9MYY8</accession>
<reference key="1">
    <citation type="submission" date="2000-06" db="EMBL/GenBank/DDBJ databases">
        <title>Cloning and sequencing of thioredoxin reductase gene from porcine reticulocyte.</title>
        <authorList>
            <person name="Lee K.S."/>
            <person name="Xu L."/>
            <person name="Xu J.Y."/>
            <person name="Cheung P.Y."/>
        </authorList>
    </citation>
    <scope>NUCLEOTIDE SEQUENCE [MRNA]</scope>
</reference>